<reference key="1">
    <citation type="submission" date="2005-11" db="EMBL/GenBank/DDBJ databases">
        <authorList>
            <consortium name="NIH - Mammalian Gene Collection (MGC) project"/>
        </authorList>
    </citation>
    <scope>NUCLEOTIDE SEQUENCE [LARGE SCALE MRNA]</scope>
    <source>
        <strain>Crossbred X Angus</strain>
        <tissue>Liver</tissue>
    </source>
</reference>
<sequence>MAMAERPRPGWASYHNPNTNSCQDLGNSILLLLGLIICINIGINMVTLLWRRLRGFLHQVFRVICEKEASKLRSPGKQTQPSKHSSPAVHLRCTMDAVKMTVTPPPTRRRHRRGSSSRRARRPVAWAPDTDDDDDEKPPHQHTAACSHNWDYPEDWEGLQTAQRFWTPWAQDTLEPPTQTIRFQQTIEGRPLKREMQSDLGLEAYVYPVNPPLPSPQILSHKNSGGGAGAGAQAEQEQCAPAEPPILGPANVPDIPRRRSSGRVTYDARDVRRRLRELTREVEALSHCYPLASGSSTAEGTRKDWVYRSMTER</sequence>
<organism>
    <name type="scientific">Bos taurus</name>
    <name type="common">Bovine</name>
    <dbReference type="NCBI Taxonomy" id="9913"/>
    <lineage>
        <taxon>Eukaryota</taxon>
        <taxon>Metazoa</taxon>
        <taxon>Chordata</taxon>
        <taxon>Craniata</taxon>
        <taxon>Vertebrata</taxon>
        <taxon>Euteleostomi</taxon>
        <taxon>Mammalia</taxon>
        <taxon>Eutheria</taxon>
        <taxon>Laurasiatheria</taxon>
        <taxon>Artiodactyla</taxon>
        <taxon>Ruminantia</taxon>
        <taxon>Pecora</taxon>
        <taxon>Bovidae</taxon>
        <taxon>Bovinae</taxon>
        <taxon>Bos</taxon>
    </lineage>
</organism>
<evidence type="ECO:0000250" key="1"/>
<evidence type="ECO:0000255" key="2"/>
<evidence type="ECO:0000256" key="3">
    <source>
        <dbReference type="SAM" id="MobiDB-lite"/>
    </source>
</evidence>
<evidence type="ECO:0000305" key="4"/>
<feature type="chain" id="PRO_0000307805" description="Spermatid maturation protein 1">
    <location>
        <begin position="1"/>
        <end position="313"/>
    </location>
</feature>
<feature type="transmembrane region" description="Helical" evidence="2">
    <location>
        <begin position="29"/>
        <end position="49"/>
    </location>
</feature>
<feature type="region of interest" description="Disordered" evidence="3">
    <location>
        <begin position="71"/>
        <end position="90"/>
    </location>
</feature>
<feature type="region of interest" description="Disordered" evidence="3">
    <location>
        <begin position="97"/>
        <end position="151"/>
    </location>
</feature>
<feature type="region of interest" description="Disordered" evidence="3">
    <location>
        <begin position="243"/>
        <end position="263"/>
    </location>
</feature>
<feature type="region of interest" description="Disordered" evidence="3">
    <location>
        <begin position="291"/>
        <end position="313"/>
    </location>
</feature>
<feature type="coiled-coil region" evidence="2">
    <location>
        <begin position="263"/>
        <end position="289"/>
    </location>
</feature>
<feature type="compositionally biased region" description="Polar residues" evidence="3">
    <location>
        <begin position="76"/>
        <end position="85"/>
    </location>
</feature>
<feature type="compositionally biased region" description="Basic residues" evidence="3">
    <location>
        <begin position="107"/>
        <end position="122"/>
    </location>
</feature>
<feature type="compositionally biased region" description="Basic and acidic residues" evidence="3">
    <location>
        <begin position="300"/>
        <end position="313"/>
    </location>
</feature>
<protein>
    <recommendedName>
        <fullName>Spermatid maturation protein 1</fullName>
    </recommendedName>
</protein>
<proteinExistence type="evidence at transcript level"/>
<name>SPEM1_BOVIN</name>
<keyword id="KW-0175">Coiled coil</keyword>
<keyword id="KW-0963">Cytoplasm</keyword>
<keyword id="KW-0217">Developmental protein</keyword>
<keyword id="KW-0221">Differentiation</keyword>
<keyword id="KW-0472">Membrane</keyword>
<keyword id="KW-1185">Reference proteome</keyword>
<keyword id="KW-0744">Spermatogenesis</keyword>
<keyword id="KW-0812">Transmembrane</keyword>
<keyword id="KW-1133">Transmembrane helix</keyword>
<gene>
    <name type="primary">SPEM1</name>
</gene>
<accession>Q32LJ5</accession>
<dbReference type="EMBL" id="BC109546">
    <property type="protein sequence ID" value="AAI09547.1"/>
    <property type="status" value="ALT_INIT"/>
    <property type="molecule type" value="mRNA"/>
</dbReference>
<dbReference type="RefSeq" id="NP_001073054.2">
    <property type="nucleotide sequence ID" value="NM_001079586.2"/>
</dbReference>
<dbReference type="FunCoup" id="Q32LJ5">
    <property type="interactions" value="89"/>
</dbReference>
<dbReference type="STRING" id="9913.ENSBTAP00000042433"/>
<dbReference type="PaxDb" id="9913-ENSBTAP00000042433"/>
<dbReference type="GeneID" id="511321"/>
<dbReference type="KEGG" id="bta:511321"/>
<dbReference type="CTD" id="374768"/>
<dbReference type="eggNOG" id="ENOG502ST8J">
    <property type="taxonomic scope" value="Eukaryota"/>
</dbReference>
<dbReference type="InParanoid" id="Q32LJ5"/>
<dbReference type="OrthoDB" id="9447057at2759"/>
<dbReference type="Proteomes" id="UP000009136">
    <property type="component" value="Unplaced"/>
</dbReference>
<dbReference type="GO" id="GO:0005737">
    <property type="term" value="C:cytoplasm"/>
    <property type="evidence" value="ECO:0000318"/>
    <property type="project" value="GO_Central"/>
</dbReference>
<dbReference type="GO" id="GO:0016020">
    <property type="term" value="C:membrane"/>
    <property type="evidence" value="ECO:0007669"/>
    <property type="project" value="UniProtKB-SubCell"/>
</dbReference>
<dbReference type="GO" id="GO:0030317">
    <property type="term" value="P:flagellated sperm motility"/>
    <property type="evidence" value="ECO:0000318"/>
    <property type="project" value="GO_Central"/>
</dbReference>
<dbReference type="GO" id="GO:0007291">
    <property type="term" value="P:sperm individualization"/>
    <property type="evidence" value="ECO:0000318"/>
    <property type="project" value="GO_Central"/>
</dbReference>
<dbReference type="InterPro" id="IPR031368">
    <property type="entry name" value="SPEM1_N"/>
</dbReference>
<dbReference type="PANTHER" id="PTHR34834">
    <property type="entry name" value="SPERMATID MATURATION PROTEIN 1"/>
    <property type="match status" value="1"/>
</dbReference>
<dbReference type="PANTHER" id="PTHR34834:SF1">
    <property type="entry name" value="SPERMATID MATURATION PROTEIN 1"/>
    <property type="match status" value="1"/>
</dbReference>
<dbReference type="Pfam" id="PF15670">
    <property type="entry name" value="Spem1"/>
    <property type="match status" value="1"/>
</dbReference>
<comment type="function">
    <text evidence="1">Required for proper cytoplasm removal during spermatogenesis.</text>
</comment>
<comment type="subcellular location">
    <subcellularLocation>
        <location evidence="4">Membrane</location>
        <topology evidence="4">Single-pass membrane protein</topology>
    </subcellularLocation>
    <subcellularLocation>
        <location evidence="1">Cytoplasm</location>
    </subcellularLocation>
</comment>
<comment type="sequence caution" evidence="4">
    <conflict type="erroneous initiation">
        <sequence resource="EMBL-CDS" id="AAI09547"/>
    </conflict>
</comment>